<protein>
    <recommendedName>
        <fullName evidence="1">Phenylalanine--tRNA ligase beta subunit</fullName>
        <ecNumber evidence="1">6.1.1.20</ecNumber>
    </recommendedName>
    <alternativeName>
        <fullName evidence="1">Phenylalanyl-tRNA synthetase beta subunit</fullName>
        <shortName evidence="1">PheRS</shortName>
    </alternativeName>
</protein>
<comment type="catalytic activity">
    <reaction evidence="1">
        <text>tRNA(Phe) + L-phenylalanine + ATP = L-phenylalanyl-tRNA(Phe) + AMP + diphosphate + H(+)</text>
        <dbReference type="Rhea" id="RHEA:19413"/>
        <dbReference type="Rhea" id="RHEA-COMP:9668"/>
        <dbReference type="Rhea" id="RHEA-COMP:9699"/>
        <dbReference type="ChEBI" id="CHEBI:15378"/>
        <dbReference type="ChEBI" id="CHEBI:30616"/>
        <dbReference type="ChEBI" id="CHEBI:33019"/>
        <dbReference type="ChEBI" id="CHEBI:58095"/>
        <dbReference type="ChEBI" id="CHEBI:78442"/>
        <dbReference type="ChEBI" id="CHEBI:78531"/>
        <dbReference type="ChEBI" id="CHEBI:456215"/>
        <dbReference type="EC" id="6.1.1.20"/>
    </reaction>
</comment>
<comment type="cofactor">
    <cofactor evidence="1">
        <name>Mg(2+)</name>
        <dbReference type="ChEBI" id="CHEBI:18420"/>
    </cofactor>
    <text evidence="1">Binds 2 magnesium ions per tetramer.</text>
</comment>
<comment type="subunit">
    <text evidence="1">Tetramer of two alpha and two beta subunits.</text>
</comment>
<comment type="subcellular location">
    <subcellularLocation>
        <location>Cytoplasm</location>
    </subcellularLocation>
</comment>
<comment type="similarity">
    <text evidence="1">Belongs to the phenylalanyl-tRNA synthetase beta subunit family. Type 1 subfamily.</text>
</comment>
<reference key="1">
    <citation type="journal article" date="2002" name="Lancet">
        <title>Genome and virulence determinants of high virulence community-acquired MRSA.</title>
        <authorList>
            <person name="Baba T."/>
            <person name="Takeuchi F."/>
            <person name="Kuroda M."/>
            <person name="Yuzawa H."/>
            <person name="Aoki K."/>
            <person name="Oguchi A."/>
            <person name="Nagai Y."/>
            <person name="Iwama N."/>
            <person name="Asano K."/>
            <person name="Naimi T."/>
            <person name="Kuroda H."/>
            <person name="Cui L."/>
            <person name="Yamamoto K."/>
            <person name="Hiramatsu K."/>
        </authorList>
    </citation>
    <scope>NUCLEOTIDE SEQUENCE [LARGE SCALE GENOMIC DNA]</scope>
    <source>
        <strain>MW2</strain>
    </source>
</reference>
<feature type="chain" id="PRO_0000126954" description="Phenylalanine--tRNA ligase beta subunit">
    <location>
        <begin position="1"/>
        <end position="800"/>
    </location>
</feature>
<feature type="domain" description="tRNA-binding" evidence="1">
    <location>
        <begin position="39"/>
        <end position="154"/>
    </location>
</feature>
<feature type="domain" description="B5" evidence="1">
    <location>
        <begin position="408"/>
        <end position="483"/>
    </location>
</feature>
<feature type="domain" description="FDX-ACB" evidence="1">
    <location>
        <begin position="708"/>
        <end position="800"/>
    </location>
</feature>
<feature type="binding site" evidence="1">
    <location>
        <position position="461"/>
    </location>
    <ligand>
        <name>Mg(2+)</name>
        <dbReference type="ChEBI" id="CHEBI:18420"/>
        <note>shared with alpha subunit</note>
    </ligand>
</feature>
<feature type="binding site" evidence="1">
    <location>
        <position position="467"/>
    </location>
    <ligand>
        <name>Mg(2+)</name>
        <dbReference type="ChEBI" id="CHEBI:18420"/>
        <note>shared with alpha subunit</note>
    </ligand>
</feature>
<feature type="binding site" evidence="1">
    <location>
        <position position="470"/>
    </location>
    <ligand>
        <name>Mg(2+)</name>
        <dbReference type="ChEBI" id="CHEBI:18420"/>
        <note>shared with alpha subunit</note>
    </ligand>
</feature>
<feature type="binding site" evidence="1">
    <location>
        <position position="471"/>
    </location>
    <ligand>
        <name>Mg(2+)</name>
        <dbReference type="ChEBI" id="CHEBI:18420"/>
        <note>shared with alpha subunit</note>
    </ligand>
</feature>
<organism>
    <name type="scientific">Staphylococcus aureus (strain MW2)</name>
    <dbReference type="NCBI Taxonomy" id="196620"/>
    <lineage>
        <taxon>Bacteria</taxon>
        <taxon>Bacillati</taxon>
        <taxon>Bacillota</taxon>
        <taxon>Bacilli</taxon>
        <taxon>Bacillales</taxon>
        <taxon>Staphylococcaceae</taxon>
        <taxon>Staphylococcus</taxon>
    </lineage>
</organism>
<gene>
    <name evidence="1" type="primary">pheT</name>
    <name type="ordered locus">MW1022</name>
</gene>
<dbReference type="EC" id="6.1.1.20" evidence="1"/>
<dbReference type="EMBL" id="BA000033">
    <property type="protein sequence ID" value="BAB94887.1"/>
    <property type="molecule type" value="Genomic_DNA"/>
</dbReference>
<dbReference type="RefSeq" id="WP_000908972.1">
    <property type="nucleotide sequence ID" value="NC_003923.1"/>
</dbReference>
<dbReference type="SMR" id="Q8NX60"/>
<dbReference type="KEGG" id="sam:MW1022"/>
<dbReference type="HOGENOM" id="CLU_016891_0_0_9"/>
<dbReference type="GO" id="GO:0009328">
    <property type="term" value="C:phenylalanine-tRNA ligase complex"/>
    <property type="evidence" value="ECO:0007669"/>
    <property type="project" value="TreeGrafter"/>
</dbReference>
<dbReference type="GO" id="GO:0005524">
    <property type="term" value="F:ATP binding"/>
    <property type="evidence" value="ECO:0007669"/>
    <property type="project" value="UniProtKB-UniRule"/>
</dbReference>
<dbReference type="GO" id="GO:0140096">
    <property type="term" value="F:catalytic activity, acting on a protein"/>
    <property type="evidence" value="ECO:0007669"/>
    <property type="project" value="UniProtKB-ARBA"/>
</dbReference>
<dbReference type="GO" id="GO:0000287">
    <property type="term" value="F:magnesium ion binding"/>
    <property type="evidence" value="ECO:0007669"/>
    <property type="project" value="UniProtKB-UniRule"/>
</dbReference>
<dbReference type="GO" id="GO:0004826">
    <property type="term" value="F:phenylalanine-tRNA ligase activity"/>
    <property type="evidence" value="ECO:0007669"/>
    <property type="project" value="UniProtKB-UniRule"/>
</dbReference>
<dbReference type="GO" id="GO:0016740">
    <property type="term" value="F:transferase activity"/>
    <property type="evidence" value="ECO:0007669"/>
    <property type="project" value="UniProtKB-ARBA"/>
</dbReference>
<dbReference type="GO" id="GO:0000049">
    <property type="term" value="F:tRNA binding"/>
    <property type="evidence" value="ECO:0007669"/>
    <property type="project" value="UniProtKB-KW"/>
</dbReference>
<dbReference type="GO" id="GO:0006432">
    <property type="term" value="P:phenylalanyl-tRNA aminoacylation"/>
    <property type="evidence" value="ECO:0007669"/>
    <property type="project" value="UniProtKB-UniRule"/>
</dbReference>
<dbReference type="CDD" id="cd00769">
    <property type="entry name" value="PheRS_beta_core"/>
    <property type="match status" value="1"/>
</dbReference>
<dbReference type="CDD" id="cd02796">
    <property type="entry name" value="tRNA_bind_bactPheRS"/>
    <property type="match status" value="1"/>
</dbReference>
<dbReference type="FunFam" id="2.40.50.140:FF:000045">
    <property type="entry name" value="Phenylalanine--tRNA ligase beta subunit"/>
    <property type="match status" value="1"/>
</dbReference>
<dbReference type="FunFam" id="3.30.56.10:FF:000002">
    <property type="entry name" value="Phenylalanine--tRNA ligase beta subunit"/>
    <property type="match status" value="1"/>
</dbReference>
<dbReference type="FunFam" id="3.30.70.380:FF:000001">
    <property type="entry name" value="Phenylalanine--tRNA ligase beta subunit"/>
    <property type="match status" value="1"/>
</dbReference>
<dbReference type="FunFam" id="3.30.930.10:FF:000022">
    <property type="entry name" value="Phenylalanine--tRNA ligase beta subunit"/>
    <property type="match status" value="1"/>
</dbReference>
<dbReference type="FunFam" id="3.50.40.10:FF:000001">
    <property type="entry name" value="Phenylalanine--tRNA ligase beta subunit"/>
    <property type="match status" value="1"/>
</dbReference>
<dbReference type="Gene3D" id="3.30.56.10">
    <property type="match status" value="2"/>
</dbReference>
<dbReference type="Gene3D" id="3.30.930.10">
    <property type="entry name" value="Bira Bifunctional Protein, Domain 2"/>
    <property type="match status" value="1"/>
</dbReference>
<dbReference type="Gene3D" id="3.30.70.380">
    <property type="entry name" value="Ferrodoxin-fold anticodon-binding domain"/>
    <property type="match status" value="1"/>
</dbReference>
<dbReference type="Gene3D" id="2.40.50.140">
    <property type="entry name" value="Nucleic acid-binding proteins"/>
    <property type="match status" value="1"/>
</dbReference>
<dbReference type="Gene3D" id="3.50.40.10">
    <property type="entry name" value="Phenylalanyl-trna Synthetase, Chain B, domain 3"/>
    <property type="match status" value="1"/>
</dbReference>
<dbReference type="HAMAP" id="MF_00283">
    <property type="entry name" value="Phe_tRNA_synth_beta1"/>
    <property type="match status" value="1"/>
</dbReference>
<dbReference type="InterPro" id="IPR045864">
    <property type="entry name" value="aa-tRNA-synth_II/BPL/LPL"/>
</dbReference>
<dbReference type="InterPro" id="IPR005146">
    <property type="entry name" value="B3/B4_tRNA-bd"/>
</dbReference>
<dbReference type="InterPro" id="IPR009061">
    <property type="entry name" value="DNA-bd_dom_put_sf"/>
</dbReference>
<dbReference type="InterPro" id="IPR005121">
    <property type="entry name" value="Fdx_antiC-bd"/>
</dbReference>
<dbReference type="InterPro" id="IPR036690">
    <property type="entry name" value="Fdx_antiC-bd_sf"/>
</dbReference>
<dbReference type="InterPro" id="IPR012340">
    <property type="entry name" value="NA-bd_OB-fold"/>
</dbReference>
<dbReference type="InterPro" id="IPR045060">
    <property type="entry name" value="Phe-tRNA-ligase_IIc_bsu"/>
</dbReference>
<dbReference type="InterPro" id="IPR004532">
    <property type="entry name" value="Phe-tRNA-ligase_IIc_bsu_bact"/>
</dbReference>
<dbReference type="InterPro" id="IPR020825">
    <property type="entry name" value="Phe-tRNA_synthase-like_B3/B4"/>
</dbReference>
<dbReference type="InterPro" id="IPR041616">
    <property type="entry name" value="PheRS_beta_core"/>
</dbReference>
<dbReference type="InterPro" id="IPR002547">
    <property type="entry name" value="tRNA-bd_dom"/>
</dbReference>
<dbReference type="InterPro" id="IPR033714">
    <property type="entry name" value="tRNA_bind_bactPheRS"/>
</dbReference>
<dbReference type="InterPro" id="IPR005147">
    <property type="entry name" value="tRNA_synthase_B5-dom"/>
</dbReference>
<dbReference type="NCBIfam" id="TIGR00472">
    <property type="entry name" value="pheT_bact"/>
    <property type="match status" value="1"/>
</dbReference>
<dbReference type="NCBIfam" id="NF045760">
    <property type="entry name" value="YtpR"/>
    <property type="match status" value="1"/>
</dbReference>
<dbReference type="PANTHER" id="PTHR10947:SF0">
    <property type="entry name" value="PHENYLALANINE--TRNA LIGASE BETA SUBUNIT"/>
    <property type="match status" value="1"/>
</dbReference>
<dbReference type="PANTHER" id="PTHR10947">
    <property type="entry name" value="PHENYLALANYL-TRNA SYNTHETASE BETA CHAIN AND LEUCINE-RICH REPEAT-CONTAINING PROTEIN 47"/>
    <property type="match status" value="1"/>
</dbReference>
<dbReference type="Pfam" id="PF03483">
    <property type="entry name" value="B3_4"/>
    <property type="match status" value="1"/>
</dbReference>
<dbReference type="Pfam" id="PF03484">
    <property type="entry name" value="B5"/>
    <property type="match status" value="1"/>
</dbReference>
<dbReference type="Pfam" id="PF03147">
    <property type="entry name" value="FDX-ACB"/>
    <property type="match status" value="1"/>
</dbReference>
<dbReference type="Pfam" id="PF01588">
    <property type="entry name" value="tRNA_bind"/>
    <property type="match status" value="1"/>
</dbReference>
<dbReference type="Pfam" id="PF17759">
    <property type="entry name" value="tRNA_synthFbeta"/>
    <property type="match status" value="1"/>
</dbReference>
<dbReference type="SMART" id="SM00873">
    <property type="entry name" value="B3_4"/>
    <property type="match status" value="1"/>
</dbReference>
<dbReference type="SMART" id="SM00874">
    <property type="entry name" value="B5"/>
    <property type="match status" value="1"/>
</dbReference>
<dbReference type="SMART" id="SM00896">
    <property type="entry name" value="FDX-ACB"/>
    <property type="match status" value="1"/>
</dbReference>
<dbReference type="SUPFAM" id="SSF54991">
    <property type="entry name" value="Anticodon-binding domain of PheRS"/>
    <property type="match status" value="1"/>
</dbReference>
<dbReference type="SUPFAM" id="SSF55681">
    <property type="entry name" value="Class II aaRS and biotin synthetases"/>
    <property type="match status" value="1"/>
</dbReference>
<dbReference type="SUPFAM" id="SSF50249">
    <property type="entry name" value="Nucleic acid-binding proteins"/>
    <property type="match status" value="1"/>
</dbReference>
<dbReference type="SUPFAM" id="SSF56037">
    <property type="entry name" value="PheT/TilS domain"/>
    <property type="match status" value="1"/>
</dbReference>
<dbReference type="SUPFAM" id="SSF46955">
    <property type="entry name" value="Putative DNA-binding domain"/>
    <property type="match status" value="1"/>
</dbReference>
<dbReference type="PROSITE" id="PS51483">
    <property type="entry name" value="B5"/>
    <property type="match status" value="1"/>
</dbReference>
<dbReference type="PROSITE" id="PS51447">
    <property type="entry name" value="FDX_ACB"/>
    <property type="match status" value="1"/>
</dbReference>
<dbReference type="PROSITE" id="PS50886">
    <property type="entry name" value="TRBD"/>
    <property type="match status" value="1"/>
</dbReference>
<name>SYFB_STAAW</name>
<evidence type="ECO:0000255" key="1">
    <source>
        <dbReference type="HAMAP-Rule" id="MF_00283"/>
    </source>
</evidence>
<sequence length="800" mass="88927">MLISNEWLKEYVTIDDSVSNLAERITRTGIEVDDLIDYTKDIKNLVVGFVKSKDKHPDADKLNVCQVDIGEDEPVQIVCGAPNVDAGQYVIVAKVGGRLPGGIKIKRAKLRGERSEGMICSLQEIGISSNYIPKSFESGIYVFSESQVPGTDALQALYLDDQVMEFDLTPNRADALSMIGTAYEVAALYNTKMTKPDTTSNELELSANDELTVTIENEDKVPYYSARVVHDVTIEPSPIWMQARLIKAGIRPINNVVDISNYVLLEYGQPLHMFDQDAIGSQQIVVRQANEGEKMTTLDDTERELLTSDIVITNGQTPIALAGVMGGDFSEVKEQTSNIVIEGAIFDPVSIRHTSRRLNLRSESSSRFEKGIATEFVDEAVDRACYLLQTYANGKVLKDRVSSGELGAFITPIDITADKINRTIGFDLSQNDIVTIFNQLGFDTEINDDVITVLVPSRRKDITIKEDLIEEVARIYGYDDIPSTLPVFDKVTSGQLTDRQYKTRMVKEVLEGAGLDQAITYSLVSKEDATAFSMQQRQTIDLLMPMSEAHASLRQSLLPHLIEAASYNVARKNKDVKLFEIGNVFFANGEGELPDQVEYLSGILTGDYVVNQWQGKKETVDFYLAKGVVDRVSEKLNLEFSYRRADIDGLHPGRTAEILLENKVVGFIGELHPTLAADNDLKRTYVFELNFDALMSVSVGYINYQPIPRFPGMSRDIALEVDQNIPAADLLSTIHAHGGNILKDTLVFDVYQGEHLEKGKKSIAIRLNYLDTEETLTDERVSKVQAEIEAALIEQGAVIR</sequence>
<keyword id="KW-0030">Aminoacyl-tRNA synthetase</keyword>
<keyword id="KW-0067">ATP-binding</keyword>
<keyword id="KW-0963">Cytoplasm</keyword>
<keyword id="KW-0436">Ligase</keyword>
<keyword id="KW-0460">Magnesium</keyword>
<keyword id="KW-0479">Metal-binding</keyword>
<keyword id="KW-0547">Nucleotide-binding</keyword>
<keyword id="KW-0648">Protein biosynthesis</keyword>
<keyword id="KW-0694">RNA-binding</keyword>
<keyword id="KW-0820">tRNA-binding</keyword>
<accession>Q8NX60</accession>
<proteinExistence type="inferred from homology"/>